<reference key="1">
    <citation type="journal article" date="2001" name="Nature">
        <title>Genome sequence and gene compaction of the eukaryote parasite Encephalitozoon cuniculi.</title>
        <authorList>
            <person name="Katinka M.D."/>
            <person name="Duprat S."/>
            <person name="Cornillot E."/>
            <person name="Metenier G."/>
            <person name="Thomarat F."/>
            <person name="Prensier G."/>
            <person name="Barbe V."/>
            <person name="Peyretaillade E."/>
            <person name="Brottier P."/>
            <person name="Wincker P."/>
            <person name="Delbac F."/>
            <person name="El Alaoui H."/>
            <person name="Peyret P."/>
            <person name="Saurin W."/>
            <person name="Gouy M."/>
            <person name="Weissenbach J."/>
            <person name="Vivares C.P."/>
        </authorList>
    </citation>
    <scope>NUCLEOTIDE SEQUENCE [LARGE SCALE GENOMIC DNA]</scope>
    <source>
        <strain>GB-M1</strain>
    </source>
</reference>
<reference key="2">
    <citation type="journal article" date="2006" name="Proteomics">
        <title>Proteomic analysis of the eukaryotic parasite Encephalitozoon cuniculi (microsporidia): a reference map for proteins expressed in late sporogonial stages.</title>
        <authorList>
            <person name="Brosson D."/>
            <person name="Kuhn L."/>
            <person name="Delbac F."/>
            <person name="Garin J."/>
            <person name="Vivares C.P."/>
            <person name="Texier C."/>
        </authorList>
    </citation>
    <scope>IDENTIFICATION BY MASS SPECTROMETRY [LARGE SCALE ANALYSIS]</scope>
    <scope>DEVELOPMENTAL STAGE</scope>
    <scope>SUBCELLULAR LOCATION</scope>
</reference>
<dbReference type="EMBL" id="AL590448">
    <property type="protein sequence ID" value="CAD26496.1"/>
    <property type="molecule type" value="Genomic_DNA"/>
</dbReference>
<dbReference type="EMBL" id="AL590449">
    <property type="protein sequence ID" value="CAD25729.1"/>
    <property type="molecule type" value="Genomic_DNA"/>
</dbReference>
<dbReference type="RefSeq" id="NP_586125.1">
    <property type="nucleotide sequence ID" value="NM_001041958.1"/>
</dbReference>
<dbReference type="RefSeq" id="NP_597320.1">
    <property type="nucleotide sequence ID" value="NM_001041929.1"/>
</dbReference>
<dbReference type="SMR" id="Q8SQH8"/>
<dbReference type="FunCoup" id="Q8SQH8">
    <property type="interactions" value="308"/>
</dbReference>
<dbReference type="STRING" id="284813.Q8SQH8"/>
<dbReference type="GeneID" id="859742"/>
<dbReference type="GeneID" id="859771"/>
<dbReference type="KEGG" id="ecu:ECU08_1930"/>
<dbReference type="KEGG" id="ecu:ECU10_0090"/>
<dbReference type="VEuPathDB" id="MicrosporidiaDB:ECU08_1930"/>
<dbReference type="VEuPathDB" id="MicrosporidiaDB:ECU10_0090"/>
<dbReference type="HOGENOM" id="CLU_040729_12_4_1"/>
<dbReference type="InParanoid" id="Q8SQH8"/>
<dbReference type="OMA" id="LWRILNI"/>
<dbReference type="OrthoDB" id="2011769at2759"/>
<dbReference type="Proteomes" id="UP000000819">
    <property type="component" value="Chromosome VIII"/>
</dbReference>
<dbReference type="Proteomes" id="UP000000819">
    <property type="component" value="Chromosome X"/>
</dbReference>
<dbReference type="GO" id="GO:0005794">
    <property type="term" value="C:Golgi apparatus"/>
    <property type="evidence" value="ECO:0007669"/>
    <property type="project" value="UniProtKB-SubCell"/>
</dbReference>
<dbReference type="GO" id="GO:0005525">
    <property type="term" value="F:GTP binding"/>
    <property type="evidence" value="ECO:0007669"/>
    <property type="project" value="UniProtKB-KW"/>
</dbReference>
<dbReference type="GO" id="GO:0003924">
    <property type="term" value="F:GTPase activity"/>
    <property type="evidence" value="ECO:0007669"/>
    <property type="project" value="InterPro"/>
</dbReference>
<dbReference type="GO" id="GO:0015031">
    <property type="term" value="P:protein transport"/>
    <property type="evidence" value="ECO:0007669"/>
    <property type="project" value="UniProtKB-KW"/>
</dbReference>
<dbReference type="GO" id="GO:0016192">
    <property type="term" value="P:vesicle-mediated transport"/>
    <property type="evidence" value="ECO:0007669"/>
    <property type="project" value="UniProtKB-KW"/>
</dbReference>
<dbReference type="CDD" id="cd00879">
    <property type="entry name" value="Sar1"/>
    <property type="match status" value="1"/>
</dbReference>
<dbReference type="Gene3D" id="3.40.50.300">
    <property type="entry name" value="P-loop containing nucleotide triphosphate hydrolases"/>
    <property type="match status" value="1"/>
</dbReference>
<dbReference type="InterPro" id="IPR027417">
    <property type="entry name" value="P-loop_NTPase"/>
</dbReference>
<dbReference type="InterPro" id="IPR005225">
    <property type="entry name" value="Small_GTP-bd"/>
</dbReference>
<dbReference type="InterPro" id="IPR024156">
    <property type="entry name" value="Small_GTPase_ARF"/>
</dbReference>
<dbReference type="InterPro" id="IPR006689">
    <property type="entry name" value="Small_GTPase_ARF/SAR"/>
</dbReference>
<dbReference type="NCBIfam" id="TIGR00231">
    <property type="entry name" value="small_GTP"/>
    <property type="match status" value="1"/>
</dbReference>
<dbReference type="PANTHER" id="PTHR11711">
    <property type="entry name" value="ADP RIBOSYLATION FACTOR-RELATED"/>
    <property type="match status" value="1"/>
</dbReference>
<dbReference type="Pfam" id="PF00025">
    <property type="entry name" value="Arf"/>
    <property type="match status" value="1"/>
</dbReference>
<dbReference type="PRINTS" id="PR00328">
    <property type="entry name" value="SAR1GTPBP"/>
</dbReference>
<dbReference type="SMART" id="SM00177">
    <property type="entry name" value="ARF"/>
    <property type="match status" value="1"/>
</dbReference>
<dbReference type="SMART" id="SM00178">
    <property type="entry name" value="SAR"/>
    <property type="match status" value="1"/>
</dbReference>
<dbReference type="SUPFAM" id="SSF52540">
    <property type="entry name" value="P-loop containing nucleoside triphosphate hydrolases"/>
    <property type="match status" value="1"/>
</dbReference>
<dbReference type="PROSITE" id="PS51417">
    <property type="entry name" value="ARF"/>
    <property type="match status" value="1"/>
</dbReference>
<proteinExistence type="evidence at protein level"/>
<evidence type="ECO:0000250" key="1"/>
<evidence type="ECO:0000269" key="2">
    <source>
    </source>
</evidence>
<evidence type="ECO:0000305" key="3"/>
<accession>Q8SQH8</accession>
<gene>
    <name type="primary">ARF-1</name>
    <name type="ordered locus">ECU08_1930</name>
</gene>
<gene>
    <name type="primary">ARF-2</name>
    <name type="ordered locus">ECU10_0090</name>
</gene>
<protein>
    <recommendedName>
        <fullName>ADP-ribosylation factor</fullName>
    </recommendedName>
</protein>
<keyword id="KW-0931">ER-Golgi transport</keyword>
<keyword id="KW-0333">Golgi apparatus</keyword>
<keyword id="KW-0342">GTP-binding</keyword>
<keyword id="KW-0449">Lipoprotein</keyword>
<keyword id="KW-0519">Myristate</keyword>
<keyword id="KW-0547">Nucleotide-binding</keyword>
<keyword id="KW-0653">Protein transport</keyword>
<keyword id="KW-1185">Reference proteome</keyword>
<keyword id="KW-0813">Transport</keyword>
<feature type="initiator methionine" description="Removed" evidence="1">
    <location>
        <position position="1"/>
    </location>
</feature>
<feature type="chain" id="PRO_0000207414" description="ADP-ribosylation factor">
    <location>
        <begin position="2"/>
        <end position="207"/>
    </location>
</feature>
<feature type="binding site" evidence="1">
    <location>
        <begin position="32"/>
        <end position="39"/>
    </location>
    <ligand>
        <name>GTP</name>
        <dbReference type="ChEBI" id="CHEBI:37565"/>
    </ligand>
</feature>
<feature type="binding site" evidence="1">
    <location>
        <begin position="75"/>
        <end position="79"/>
    </location>
    <ligand>
        <name>GTP</name>
        <dbReference type="ChEBI" id="CHEBI:37565"/>
    </ligand>
</feature>
<feature type="binding site" evidence="1">
    <location>
        <begin position="133"/>
        <end position="136"/>
    </location>
    <ligand>
        <name>GTP</name>
        <dbReference type="ChEBI" id="CHEBI:37565"/>
    </ligand>
</feature>
<feature type="lipid moiety-binding region" description="N-myristoyl glycine" evidence="1">
    <location>
        <position position="2"/>
    </location>
</feature>
<name>ARF_ENCCU</name>
<organism>
    <name type="scientific">Encephalitozoon cuniculi (strain GB-M1)</name>
    <name type="common">Microsporidian parasite</name>
    <dbReference type="NCBI Taxonomy" id="284813"/>
    <lineage>
        <taxon>Eukaryota</taxon>
        <taxon>Fungi</taxon>
        <taxon>Fungi incertae sedis</taxon>
        <taxon>Microsporidia</taxon>
        <taxon>Unikaryonidae</taxon>
        <taxon>Encephalitozoon</taxon>
    </lineage>
</organism>
<sequence>MGNMMSKVNNLLYTKLRGLFSGQSERSITMIGLDGAGKTTLLLYLQTGEVHQTVPTLGFNCENVTLGSMKFQVWDIGGQNSFMRFWHQYINEGCGIIYMVDCADPQRFGKSGEELWRILNILNSPRPLLVLANKIDLIREHERSEVVKSIRNEFNLERYNGPSQVVPISVLQAGSMTSANDENGREIIDAFRWLNKELEKMPRAEAL</sequence>
<comment type="function">
    <text evidence="1">GTP-binding protein involved in protein trafficking; may modulate vesicle budding and uncoating within the Golgi apparatus.</text>
</comment>
<comment type="subcellular location">
    <subcellularLocation>
        <location evidence="1">Golgi apparatus</location>
    </subcellularLocation>
</comment>
<comment type="developmental stage">
    <text evidence="2">Expressed in late sporogonial stages.</text>
</comment>
<comment type="similarity">
    <text evidence="3">Belongs to the small GTPase superfamily. Arf family.</text>
</comment>